<keyword id="KW-0963">Cytoplasm</keyword>
<keyword id="KW-0274">FAD</keyword>
<keyword id="KW-0285">Flavoprotein</keyword>
<keyword id="KW-0479">Metal-binding</keyword>
<keyword id="KW-0560">Oxidoreductase</keyword>
<keyword id="KW-0597">Phosphoprotein</keyword>
<keyword id="KW-1185">Reference proteome</keyword>
<keyword id="KW-0862">Zinc</keyword>
<reference key="1">
    <citation type="journal article" date="2000" name="Gene">
        <title>Mouse NRH:quinone oxidoreductase (NQO2): cloning of cDNA and gene- and tissue-specific expression.</title>
        <authorList>
            <person name="Long D.J. II"/>
            <person name="Jaiswal A.K."/>
        </authorList>
    </citation>
    <scope>NUCLEOTIDE SEQUENCE [GENOMIC DNA / MRNA]</scope>
    <source>
        <tissue>Kidney</tissue>
    </source>
</reference>
<reference key="2">
    <citation type="journal article" date="2005" name="Science">
        <title>The transcriptional landscape of the mammalian genome.</title>
        <authorList>
            <person name="Carninci P."/>
            <person name="Kasukawa T."/>
            <person name="Katayama S."/>
            <person name="Gough J."/>
            <person name="Frith M.C."/>
            <person name="Maeda N."/>
            <person name="Oyama R."/>
            <person name="Ravasi T."/>
            <person name="Lenhard B."/>
            <person name="Wells C."/>
            <person name="Kodzius R."/>
            <person name="Shimokawa K."/>
            <person name="Bajic V.B."/>
            <person name="Brenner S.E."/>
            <person name="Batalov S."/>
            <person name="Forrest A.R."/>
            <person name="Zavolan M."/>
            <person name="Davis M.J."/>
            <person name="Wilming L.G."/>
            <person name="Aidinis V."/>
            <person name="Allen J.E."/>
            <person name="Ambesi-Impiombato A."/>
            <person name="Apweiler R."/>
            <person name="Aturaliya R.N."/>
            <person name="Bailey T.L."/>
            <person name="Bansal M."/>
            <person name="Baxter L."/>
            <person name="Beisel K.W."/>
            <person name="Bersano T."/>
            <person name="Bono H."/>
            <person name="Chalk A.M."/>
            <person name="Chiu K.P."/>
            <person name="Choudhary V."/>
            <person name="Christoffels A."/>
            <person name="Clutterbuck D.R."/>
            <person name="Crowe M.L."/>
            <person name="Dalla E."/>
            <person name="Dalrymple B.P."/>
            <person name="de Bono B."/>
            <person name="Della Gatta G."/>
            <person name="di Bernardo D."/>
            <person name="Down T."/>
            <person name="Engstrom P."/>
            <person name="Fagiolini M."/>
            <person name="Faulkner G."/>
            <person name="Fletcher C.F."/>
            <person name="Fukushima T."/>
            <person name="Furuno M."/>
            <person name="Futaki S."/>
            <person name="Gariboldi M."/>
            <person name="Georgii-Hemming P."/>
            <person name="Gingeras T.R."/>
            <person name="Gojobori T."/>
            <person name="Green R.E."/>
            <person name="Gustincich S."/>
            <person name="Harbers M."/>
            <person name="Hayashi Y."/>
            <person name="Hensch T.K."/>
            <person name="Hirokawa N."/>
            <person name="Hill D."/>
            <person name="Huminiecki L."/>
            <person name="Iacono M."/>
            <person name="Ikeo K."/>
            <person name="Iwama A."/>
            <person name="Ishikawa T."/>
            <person name="Jakt M."/>
            <person name="Kanapin A."/>
            <person name="Katoh M."/>
            <person name="Kawasawa Y."/>
            <person name="Kelso J."/>
            <person name="Kitamura H."/>
            <person name="Kitano H."/>
            <person name="Kollias G."/>
            <person name="Krishnan S.P."/>
            <person name="Kruger A."/>
            <person name="Kummerfeld S.K."/>
            <person name="Kurochkin I.V."/>
            <person name="Lareau L.F."/>
            <person name="Lazarevic D."/>
            <person name="Lipovich L."/>
            <person name="Liu J."/>
            <person name="Liuni S."/>
            <person name="McWilliam S."/>
            <person name="Madan Babu M."/>
            <person name="Madera M."/>
            <person name="Marchionni L."/>
            <person name="Matsuda H."/>
            <person name="Matsuzawa S."/>
            <person name="Miki H."/>
            <person name="Mignone F."/>
            <person name="Miyake S."/>
            <person name="Morris K."/>
            <person name="Mottagui-Tabar S."/>
            <person name="Mulder N."/>
            <person name="Nakano N."/>
            <person name="Nakauchi H."/>
            <person name="Ng P."/>
            <person name="Nilsson R."/>
            <person name="Nishiguchi S."/>
            <person name="Nishikawa S."/>
            <person name="Nori F."/>
            <person name="Ohara O."/>
            <person name="Okazaki Y."/>
            <person name="Orlando V."/>
            <person name="Pang K.C."/>
            <person name="Pavan W.J."/>
            <person name="Pavesi G."/>
            <person name="Pesole G."/>
            <person name="Petrovsky N."/>
            <person name="Piazza S."/>
            <person name="Reed J."/>
            <person name="Reid J.F."/>
            <person name="Ring B.Z."/>
            <person name="Ringwald M."/>
            <person name="Rost B."/>
            <person name="Ruan Y."/>
            <person name="Salzberg S.L."/>
            <person name="Sandelin A."/>
            <person name="Schneider C."/>
            <person name="Schoenbach C."/>
            <person name="Sekiguchi K."/>
            <person name="Semple C.A."/>
            <person name="Seno S."/>
            <person name="Sessa L."/>
            <person name="Sheng Y."/>
            <person name="Shibata Y."/>
            <person name="Shimada H."/>
            <person name="Shimada K."/>
            <person name="Silva D."/>
            <person name="Sinclair B."/>
            <person name="Sperling S."/>
            <person name="Stupka E."/>
            <person name="Sugiura K."/>
            <person name="Sultana R."/>
            <person name="Takenaka Y."/>
            <person name="Taki K."/>
            <person name="Tammoja K."/>
            <person name="Tan S.L."/>
            <person name="Tang S."/>
            <person name="Taylor M.S."/>
            <person name="Tegner J."/>
            <person name="Teichmann S.A."/>
            <person name="Ueda H.R."/>
            <person name="van Nimwegen E."/>
            <person name="Verardo R."/>
            <person name="Wei C.L."/>
            <person name="Yagi K."/>
            <person name="Yamanishi H."/>
            <person name="Zabarovsky E."/>
            <person name="Zhu S."/>
            <person name="Zimmer A."/>
            <person name="Hide W."/>
            <person name="Bult C."/>
            <person name="Grimmond S.M."/>
            <person name="Teasdale R.D."/>
            <person name="Liu E.T."/>
            <person name="Brusic V."/>
            <person name="Quackenbush J."/>
            <person name="Wahlestedt C."/>
            <person name="Mattick J.S."/>
            <person name="Hume D.A."/>
            <person name="Kai C."/>
            <person name="Sasaki D."/>
            <person name="Tomaru Y."/>
            <person name="Fukuda S."/>
            <person name="Kanamori-Katayama M."/>
            <person name="Suzuki M."/>
            <person name="Aoki J."/>
            <person name="Arakawa T."/>
            <person name="Iida J."/>
            <person name="Imamura K."/>
            <person name="Itoh M."/>
            <person name="Kato T."/>
            <person name="Kawaji H."/>
            <person name="Kawagashira N."/>
            <person name="Kawashima T."/>
            <person name="Kojima M."/>
            <person name="Kondo S."/>
            <person name="Konno H."/>
            <person name="Nakano K."/>
            <person name="Ninomiya N."/>
            <person name="Nishio T."/>
            <person name="Okada M."/>
            <person name="Plessy C."/>
            <person name="Shibata K."/>
            <person name="Shiraki T."/>
            <person name="Suzuki S."/>
            <person name="Tagami M."/>
            <person name="Waki K."/>
            <person name="Watahiki A."/>
            <person name="Okamura-Oho Y."/>
            <person name="Suzuki H."/>
            <person name="Kawai J."/>
            <person name="Hayashizaki Y."/>
        </authorList>
    </citation>
    <scope>NUCLEOTIDE SEQUENCE [LARGE SCALE MRNA]</scope>
    <source>
        <strain>C57BL/6J</strain>
        <tissue>Embryonic liver</tissue>
    </source>
</reference>
<reference key="3">
    <citation type="journal article" date="2004" name="Genome Res.">
        <title>The status, quality, and expansion of the NIH full-length cDNA project: the Mammalian Gene Collection (MGC).</title>
        <authorList>
            <consortium name="The MGC Project Team"/>
        </authorList>
    </citation>
    <scope>NUCLEOTIDE SEQUENCE [LARGE SCALE MRNA]</scope>
    <source>
        <tissue>Thymus</tissue>
    </source>
</reference>
<reference key="4">
    <citation type="journal article" date="2010" name="Cell">
        <title>A tissue-specific atlas of mouse protein phosphorylation and expression.</title>
        <authorList>
            <person name="Huttlin E.L."/>
            <person name="Jedrychowski M.P."/>
            <person name="Elias J.E."/>
            <person name="Goswami T."/>
            <person name="Rad R."/>
            <person name="Beausoleil S.A."/>
            <person name="Villen J."/>
            <person name="Haas W."/>
            <person name="Sowa M.E."/>
            <person name="Gygi S.P."/>
        </authorList>
    </citation>
    <scope>IDENTIFICATION BY MASS SPECTROMETRY [LARGE SCALE ANALYSIS]</scope>
    <source>
        <tissue>Brain</tissue>
        <tissue>Brown adipose tissue</tissue>
        <tissue>Heart</tissue>
        <tissue>Kidney</tissue>
        <tissue>Liver</tissue>
        <tissue>Lung</tissue>
        <tissue>Pancreas</tissue>
        <tissue>Spleen</tissue>
        <tissue>Testis</tissue>
    </source>
</reference>
<organism>
    <name type="scientific">Mus musculus</name>
    <name type="common">Mouse</name>
    <dbReference type="NCBI Taxonomy" id="10090"/>
    <lineage>
        <taxon>Eukaryota</taxon>
        <taxon>Metazoa</taxon>
        <taxon>Chordata</taxon>
        <taxon>Craniata</taxon>
        <taxon>Vertebrata</taxon>
        <taxon>Euteleostomi</taxon>
        <taxon>Mammalia</taxon>
        <taxon>Eutheria</taxon>
        <taxon>Euarchontoglires</taxon>
        <taxon>Glires</taxon>
        <taxon>Rodentia</taxon>
        <taxon>Myomorpha</taxon>
        <taxon>Muroidea</taxon>
        <taxon>Muridae</taxon>
        <taxon>Murinae</taxon>
        <taxon>Mus</taxon>
        <taxon>Mus</taxon>
    </lineage>
</organism>
<dbReference type="EC" id="1.10.5.1"/>
<dbReference type="EMBL" id="AF252260">
    <property type="protein sequence ID" value="AAF97785.1"/>
    <property type="molecule type" value="mRNA"/>
</dbReference>
<dbReference type="EMBL" id="AF254081">
    <property type="protein sequence ID" value="AAF97789.1"/>
    <property type="molecule type" value="Genomic_DNA"/>
</dbReference>
<dbReference type="EMBL" id="AF254076">
    <property type="protein sequence ID" value="AAF97789.1"/>
    <property type="status" value="JOINED"/>
    <property type="molecule type" value="Genomic_DNA"/>
</dbReference>
<dbReference type="EMBL" id="AF254077">
    <property type="protein sequence ID" value="AAF97789.1"/>
    <property type="status" value="JOINED"/>
    <property type="molecule type" value="Genomic_DNA"/>
</dbReference>
<dbReference type="EMBL" id="AF254078">
    <property type="protein sequence ID" value="AAF97789.1"/>
    <property type="status" value="JOINED"/>
    <property type="molecule type" value="Genomic_DNA"/>
</dbReference>
<dbReference type="EMBL" id="AF254079">
    <property type="protein sequence ID" value="AAF97789.1"/>
    <property type="status" value="JOINED"/>
    <property type="molecule type" value="Genomic_DNA"/>
</dbReference>
<dbReference type="EMBL" id="AF254080">
    <property type="protein sequence ID" value="AAF97789.1"/>
    <property type="status" value="JOINED"/>
    <property type="molecule type" value="Genomic_DNA"/>
</dbReference>
<dbReference type="EMBL" id="AK010842">
    <property type="protein sequence ID" value="BAB27217.1"/>
    <property type="molecule type" value="mRNA"/>
</dbReference>
<dbReference type="EMBL" id="BC027629">
    <property type="protein sequence ID" value="AAH27629.1"/>
    <property type="molecule type" value="mRNA"/>
</dbReference>
<dbReference type="CCDS" id="CCDS26442.1"/>
<dbReference type="RefSeq" id="NP_001156713.1">
    <property type="nucleotide sequence ID" value="NM_001163241.2"/>
</dbReference>
<dbReference type="RefSeq" id="NP_001156714.1">
    <property type="nucleotide sequence ID" value="NM_001163242.2"/>
</dbReference>
<dbReference type="RefSeq" id="NP_001413070.1">
    <property type="nucleotide sequence ID" value="NM_001426141.1"/>
</dbReference>
<dbReference type="RefSeq" id="NP_001413071.1">
    <property type="nucleotide sequence ID" value="NM_001426142.1"/>
</dbReference>
<dbReference type="RefSeq" id="NP_064678.1">
    <property type="nucleotide sequence ID" value="NM_020282.4"/>
</dbReference>
<dbReference type="RefSeq" id="XP_006516637.1">
    <property type="nucleotide sequence ID" value="XM_006516574.3"/>
</dbReference>
<dbReference type="SMR" id="Q9JI75"/>
<dbReference type="BioGRID" id="201791">
    <property type="interactions" value="4"/>
</dbReference>
<dbReference type="FunCoup" id="Q9JI75">
    <property type="interactions" value="207"/>
</dbReference>
<dbReference type="STRING" id="10090.ENSMUSP00000053809"/>
<dbReference type="GlyGen" id="Q9JI75">
    <property type="glycosylation" value="1 site, 1 O-linked glycan (1 site)"/>
</dbReference>
<dbReference type="iPTMnet" id="Q9JI75"/>
<dbReference type="PhosphoSitePlus" id="Q9JI75"/>
<dbReference type="SwissPalm" id="Q9JI75"/>
<dbReference type="jPOST" id="Q9JI75"/>
<dbReference type="PaxDb" id="10090-ENSMUSP00000021843"/>
<dbReference type="ProteomicsDB" id="293887"/>
<dbReference type="Pumba" id="Q9JI75"/>
<dbReference type="Antibodypedia" id="9328">
    <property type="antibodies" value="559 antibodies from 34 providers"/>
</dbReference>
<dbReference type="DNASU" id="18105"/>
<dbReference type="Ensembl" id="ENSMUST00000021843.13">
    <property type="protein sequence ID" value="ENSMUSP00000021843.6"/>
    <property type="gene ID" value="ENSMUSG00000046949.17"/>
</dbReference>
<dbReference type="Ensembl" id="ENSMUST00000058978.9">
    <property type="protein sequence ID" value="ENSMUSP00000053809.8"/>
    <property type="gene ID" value="ENSMUSG00000046949.17"/>
</dbReference>
<dbReference type="Ensembl" id="ENSMUST00000222740.2">
    <property type="protein sequence ID" value="ENSMUSP00000152294.2"/>
    <property type="gene ID" value="ENSMUSG00000046949.17"/>
</dbReference>
<dbReference type="GeneID" id="18105"/>
<dbReference type="KEGG" id="mmu:18105"/>
<dbReference type="UCSC" id="uc007qas.2">
    <property type="organism name" value="mouse"/>
</dbReference>
<dbReference type="AGR" id="MGI:104513"/>
<dbReference type="CTD" id="4835"/>
<dbReference type="MGI" id="MGI:104513">
    <property type="gene designation" value="Nqo2"/>
</dbReference>
<dbReference type="VEuPathDB" id="HostDB:ENSMUSG00000046949"/>
<dbReference type="eggNOG" id="ENOG502QRQH">
    <property type="taxonomic scope" value="Eukaryota"/>
</dbReference>
<dbReference type="GeneTree" id="ENSGT00940000156563"/>
<dbReference type="HOGENOM" id="CLU_058643_2_0_1"/>
<dbReference type="InParanoid" id="Q9JI75"/>
<dbReference type="OMA" id="GREHMFG"/>
<dbReference type="OrthoDB" id="26889at2759"/>
<dbReference type="PhylomeDB" id="Q9JI75"/>
<dbReference type="TreeFam" id="TF300296"/>
<dbReference type="BRENDA" id="1.10.5.1">
    <property type="organism ID" value="3474"/>
</dbReference>
<dbReference type="Reactome" id="R-MMU-211945">
    <property type="pathway name" value="Phase I - Functionalization of compounds"/>
</dbReference>
<dbReference type="BioGRID-ORCS" id="18105">
    <property type="hits" value="2 hits in 79 CRISPR screens"/>
</dbReference>
<dbReference type="ChiTaRS" id="Nqo2">
    <property type="organism name" value="mouse"/>
</dbReference>
<dbReference type="PRO" id="PR:Q9JI75"/>
<dbReference type="Proteomes" id="UP000000589">
    <property type="component" value="Chromosome 13"/>
</dbReference>
<dbReference type="RNAct" id="Q9JI75">
    <property type="molecule type" value="protein"/>
</dbReference>
<dbReference type="Bgee" id="ENSMUSG00000046949">
    <property type="expression patterns" value="Expressed in lumbar dorsal root ganglion and 227 other cell types or tissues"/>
</dbReference>
<dbReference type="ExpressionAtlas" id="Q9JI75">
    <property type="expression patterns" value="baseline and differential"/>
</dbReference>
<dbReference type="GO" id="GO:0005829">
    <property type="term" value="C:cytosol"/>
    <property type="evidence" value="ECO:0007669"/>
    <property type="project" value="Ensembl"/>
</dbReference>
<dbReference type="GO" id="GO:0005654">
    <property type="term" value="C:nucleoplasm"/>
    <property type="evidence" value="ECO:0007669"/>
    <property type="project" value="Ensembl"/>
</dbReference>
<dbReference type="GO" id="GO:0031404">
    <property type="term" value="F:chloride ion binding"/>
    <property type="evidence" value="ECO:0007669"/>
    <property type="project" value="Ensembl"/>
</dbReference>
<dbReference type="GO" id="GO:0001512">
    <property type="term" value="F:dihydronicotinamide riboside quinone reductase activity"/>
    <property type="evidence" value="ECO:0007669"/>
    <property type="project" value="UniProtKB-EC"/>
</dbReference>
<dbReference type="GO" id="GO:0009055">
    <property type="term" value="F:electron transfer activity"/>
    <property type="evidence" value="ECO:0007669"/>
    <property type="project" value="Ensembl"/>
</dbReference>
<dbReference type="GO" id="GO:0071949">
    <property type="term" value="F:FAD binding"/>
    <property type="evidence" value="ECO:0007669"/>
    <property type="project" value="Ensembl"/>
</dbReference>
<dbReference type="GO" id="GO:1904408">
    <property type="term" value="F:melatonin binding"/>
    <property type="evidence" value="ECO:0007669"/>
    <property type="project" value="Ensembl"/>
</dbReference>
<dbReference type="GO" id="GO:0016661">
    <property type="term" value="F:oxidoreductase activity, acting on other nitrogenous compounds as donors"/>
    <property type="evidence" value="ECO:0007669"/>
    <property type="project" value="Ensembl"/>
</dbReference>
<dbReference type="GO" id="GO:0042803">
    <property type="term" value="F:protein homodimerization activity"/>
    <property type="evidence" value="ECO:0007669"/>
    <property type="project" value="Ensembl"/>
</dbReference>
<dbReference type="GO" id="GO:1905594">
    <property type="term" value="F:resveratrol binding"/>
    <property type="evidence" value="ECO:0007669"/>
    <property type="project" value="Ensembl"/>
</dbReference>
<dbReference type="GO" id="GO:0008270">
    <property type="term" value="F:zinc ion binding"/>
    <property type="evidence" value="ECO:0007669"/>
    <property type="project" value="Ensembl"/>
</dbReference>
<dbReference type="GO" id="GO:1901662">
    <property type="term" value="P:quinone catabolic process"/>
    <property type="evidence" value="ECO:0007669"/>
    <property type="project" value="Ensembl"/>
</dbReference>
<dbReference type="FunFam" id="3.40.50.360:FF:000030">
    <property type="entry name" value="ribosyldihydronicotinamide dehydrogenase [quinone]"/>
    <property type="match status" value="1"/>
</dbReference>
<dbReference type="Gene3D" id="3.40.50.360">
    <property type="match status" value="1"/>
</dbReference>
<dbReference type="InterPro" id="IPR003680">
    <property type="entry name" value="Flavodoxin_fold"/>
</dbReference>
<dbReference type="InterPro" id="IPR029039">
    <property type="entry name" value="Flavoprotein-like_sf"/>
</dbReference>
<dbReference type="InterPro" id="IPR051545">
    <property type="entry name" value="NAD(P)H_dehydrogenase_qn"/>
</dbReference>
<dbReference type="PANTHER" id="PTHR10204">
    <property type="entry name" value="NAD P H OXIDOREDUCTASE-RELATED"/>
    <property type="match status" value="1"/>
</dbReference>
<dbReference type="PANTHER" id="PTHR10204:SF33">
    <property type="entry name" value="RIBOSYLDIHYDRONICOTINAMIDE DEHYDROGENASE [QUINONE]"/>
    <property type="match status" value="1"/>
</dbReference>
<dbReference type="Pfam" id="PF02525">
    <property type="entry name" value="Flavodoxin_2"/>
    <property type="match status" value="1"/>
</dbReference>
<dbReference type="SUPFAM" id="SSF52218">
    <property type="entry name" value="Flavoproteins"/>
    <property type="match status" value="1"/>
</dbReference>
<feature type="chain" id="PRO_0000071627" description="Ribosyldihydronicotinamide dehydrogenase [quinone]">
    <location>
        <begin position="1"/>
        <end position="231"/>
    </location>
</feature>
<feature type="binding site" evidence="1">
    <location>
        <position position="12"/>
    </location>
    <ligand>
        <name>FAD</name>
        <dbReference type="ChEBI" id="CHEBI:57692"/>
    </ligand>
</feature>
<feature type="binding site" evidence="1">
    <location>
        <begin position="18"/>
        <end position="21"/>
    </location>
    <ligand>
        <name>FAD</name>
        <dbReference type="ChEBI" id="CHEBI:57692"/>
    </ligand>
</feature>
<feature type="binding site" evidence="1">
    <location>
        <begin position="104"/>
        <end position="107"/>
    </location>
    <ligand>
        <name>FAD</name>
        <dbReference type="ChEBI" id="CHEBI:57692"/>
    </ligand>
</feature>
<feature type="binding site" evidence="1">
    <location>
        <begin position="127"/>
        <end position="129"/>
    </location>
    <ligand>
        <name>substrate</name>
    </ligand>
</feature>
<feature type="binding site" evidence="1">
    <location>
        <begin position="148"/>
        <end position="151"/>
    </location>
    <ligand>
        <name>FAD</name>
        <dbReference type="ChEBI" id="CHEBI:57692"/>
    </ligand>
</feature>
<feature type="binding site" evidence="1">
    <location>
        <position position="156"/>
    </location>
    <ligand>
        <name>FAD</name>
        <dbReference type="ChEBI" id="CHEBI:57692"/>
    </ligand>
</feature>
<feature type="binding site" evidence="1">
    <location>
        <position position="174"/>
    </location>
    <ligand>
        <name>Zn(2+)</name>
        <dbReference type="ChEBI" id="CHEBI:29105"/>
    </ligand>
</feature>
<feature type="binding site" evidence="1">
    <location>
        <position position="178"/>
    </location>
    <ligand>
        <name>Zn(2+)</name>
        <dbReference type="ChEBI" id="CHEBI:29105"/>
    </ligand>
</feature>
<feature type="binding site" evidence="1">
    <location>
        <position position="194"/>
    </location>
    <ligand>
        <name>FAD</name>
        <dbReference type="ChEBI" id="CHEBI:57692"/>
    </ligand>
</feature>
<feature type="binding site" evidence="1">
    <location>
        <position position="201"/>
    </location>
    <ligand>
        <name>FAD</name>
        <dbReference type="ChEBI" id="CHEBI:57692"/>
    </ligand>
</feature>
<feature type="binding site" evidence="1">
    <location>
        <position position="223"/>
    </location>
    <ligand>
        <name>Zn(2+)</name>
        <dbReference type="ChEBI" id="CHEBI:29105"/>
    </ligand>
</feature>
<feature type="modified residue" description="Phosphoserine" evidence="2">
    <location>
        <position position="197"/>
    </location>
</feature>
<gene>
    <name type="primary">Nqo2</name>
    <name type="synonym">Nmor2</name>
</gene>
<comment type="function">
    <text>The enzyme apparently serves as a quinone reductase in connection with conjugation reactions of hydroquinones involved in detoxification pathways as well as in biosynthetic processes such as the vitamin K-dependent gamma-carboxylation of glutamate residues in prothrombin synthesis.</text>
</comment>
<comment type="catalytic activity">
    <reaction>
        <text>1-(beta-D-ribofuranosyl)-1,4-dihydronicotinamide + a quinone + H(+) = beta-nicotinamide D-riboside + a quinol</text>
        <dbReference type="Rhea" id="RHEA:12364"/>
        <dbReference type="ChEBI" id="CHEBI:15378"/>
        <dbReference type="ChEBI" id="CHEBI:15927"/>
        <dbReference type="ChEBI" id="CHEBI:24646"/>
        <dbReference type="ChEBI" id="CHEBI:55458"/>
        <dbReference type="ChEBI" id="CHEBI:132124"/>
        <dbReference type="EC" id="1.10.5.1"/>
    </reaction>
</comment>
<comment type="cofactor">
    <cofactor evidence="1">
        <name>Zn(2+)</name>
        <dbReference type="ChEBI" id="CHEBI:29105"/>
    </cofactor>
    <text evidence="1">Binds 1 zinc ion per subunit.</text>
</comment>
<comment type="cofactor">
    <cofactor evidence="1">
        <name>FAD</name>
        <dbReference type="ChEBI" id="CHEBI:57692"/>
    </cofactor>
</comment>
<comment type="subunit">
    <text evidence="1">Homodimer.</text>
</comment>
<comment type="subcellular location">
    <subcellularLocation>
        <location evidence="1">Cytoplasm</location>
    </subcellularLocation>
</comment>
<comment type="miscellaneous">
    <text>Uses dihydronicotinamide riboside (NRH) rather than NAD(P)H as an electron donor.</text>
</comment>
<comment type="similarity">
    <text evidence="3">Belongs to the NAD(P)H dehydrogenase (quinone) family.</text>
</comment>
<sequence length="231" mass="26248">MAGKKVLIVYAHQEPKSFNGSLKKVAVEELSKQGCTVTVSDLYSMNFEPRATRNDITGAPSNPDVFSYGIETHEAYKKKALTSDIFEEQRKVQEADLVIFQFPLYWFSVPAILKGWMDRVLCRGFAFDIPGFYDSGFLKGKLALLSLTTGGTAEMYTKDGVSGDFRYFLWPLQHGTLHFCGFKVLAPQISFGLDVSSEEERKVMLASWAQRLKSIWKEEPIHCTPPWYFQE</sequence>
<proteinExistence type="evidence at protein level"/>
<name>NQO2_MOUSE</name>
<protein>
    <recommendedName>
        <fullName>Ribosyldihydronicotinamide dehydrogenase [quinone]</fullName>
        <ecNumber>1.10.5.1</ecNumber>
    </recommendedName>
    <alternativeName>
        <fullName>NRH dehydrogenase [quinone] 2</fullName>
    </alternativeName>
    <alternativeName>
        <fullName>NRH:quinone oxidoreductase 2</fullName>
    </alternativeName>
    <alternativeName>
        <fullName>Quinone reductase 2</fullName>
        <shortName>QR2</shortName>
    </alternativeName>
</protein>
<accession>Q9JI75</accession>
<evidence type="ECO:0000250" key="1"/>
<evidence type="ECO:0000250" key="2">
    <source>
        <dbReference type="UniProtKB" id="P16083"/>
    </source>
</evidence>
<evidence type="ECO:0000305" key="3"/>